<evidence type="ECO:0000255" key="1">
    <source>
        <dbReference type="HAMAP-Rule" id="MF_01609"/>
    </source>
</evidence>
<proteinExistence type="inferred from homology"/>
<dbReference type="EC" id="6.3.2.2" evidence="1"/>
<dbReference type="EMBL" id="CP000031">
    <property type="protein sequence ID" value="AAV95475.1"/>
    <property type="molecule type" value="Genomic_DNA"/>
</dbReference>
<dbReference type="SMR" id="Q5LRC0"/>
<dbReference type="STRING" id="246200.SPO2209"/>
<dbReference type="PaxDb" id="246200-SPO2209"/>
<dbReference type="KEGG" id="sil:SPO2209"/>
<dbReference type="eggNOG" id="COG2170">
    <property type="taxonomic scope" value="Bacteria"/>
</dbReference>
<dbReference type="HOGENOM" id="CLU_044848_1_0_5"/>
<dbReference type="Proteomes" id="UP000001023">
    <property type="component" value="Chromosome"/>
</dbReference>
<dbReference type="GO" id="GO:0005524">
    <property type="term" value="F:ATP binding"/>
    <property type="evidence" value="ECO:0007669"/>
    <property type="project" value="UniProtKB-KW"/>
</dbReference>
<dbReference type="GO" id="GO:0004357">
    <property type="term" value="F:glutamate-cysteine ligase activity"/>
    <property type="evidence" value="ECO:0007669"/>
    <property type="project" value="UniProtKB-EC"/>
</dbReference>
<dbReference type="GO" id="GO:0042398">
    <property type="term" value="P:modified amino acid biosynthetic process"/>
    <property type="evidence" value="ECO:0007669"/>
    <property type="project" value="InterPro"/>
</dbReference>
<dbReference type="Gene3D" id="3.30.590.20">
    <property type="match status" value="1"/>
</dbReference>
<dbReference type="HAMAP" id="MF_01609">
    <property type="entry name" value="Glu_cys_ligase_2"/>
    <property type="match status" value="1"/>
</dbReference>
<dbReference type="InterPro" id="IPR050141">
    <property type="entry name" value="GCL_type2/YbdK_subfam"/>
</dbReference>
<dbReference type="InterPro" id="IPR006336">
    <property type="entry name" value="GCS2"/>
</dbReference>
<dbReference type="InterPro" id="IPR014746">
    <property type="entry name" value="Gln_synth/guanido_kin_cat_dom"/>
</dbReference>
<dbReference type="InterPro" id="IPR011793">
    <property type="entry name" value="YbdK"/>
</dbReference>
<dbReference type="NCBIfam" id="TIGR02050">
    <property type="entry name" value="gshA_cyan_rel"/>
    <property type="match status" value="1"/>
</dbReference>
<dbReference type="NCBIfam" id="NF010039">
    <property type="entry name" value="PRK13515.1"/>
    <property type="match status" value="1"/>
</dbReference>
<dbReference type="PANTHER" id="PTHR36510">
    <property type="entry name" value="GLUTAMATE--CYSTEINE LIGASE 2-RELATED"/>
    <property type="match status" value="1"/>
</dbReference>
<dbReference type="PANTHER" id="PTHR36510:SF1">
    <property type="entry name" value="GLUTAMATE--CYSTEINE LIGASE 2-RELATED"/>
    <property type="match status" value="1"/>
</dbReference>
<dbReference type="Pfam" id="PF04107">
    <property type="entry name" value="GCS2"/>
    <property type="match status" value="1"/>
</dbReference>
<dbReference type="SUPFAM" id="SSF55931">
    <property type="entry name" value="Glutamine synthetase/guanido kinase"/>
    <property type="match status" value="1"/>
</dbReference>
<gene>
    <name type="ordered locus">SPO2209</name>
</gene>
<keyword id="KW-0067">ATP-binding</keyword>
<keyword id="KW-0436">Ligase</keyword>
<keyword id="KW-0547">Nucleotide-binding</keyword>
<keyword id="KW-1185">Reference proteome</keyword>
<sequence length="384" mass="43509">MPVHWSKTGSGGVMQKEFTLGIEEEYLLVDRDSLQLAEAPEALMSTCQADFEGQVSPEFLQCQIEVGTRPHATIAAAREDLKRLRAGVSQRAAEHNLTPIAVSCHPFASWKDQHHTRKERYDALQHALGGVARRMLICGMHVHIGVEDKALRADLMPQLSYFLPHMLALSASSPFWNGEDTGLSSYRLTIFDNLPRTGLPPSFSSWAEYERTTGILVELGVIEDTTKIWWDLRPSHRFPTLETRIMDVQPRLEHALSLAAMNQALMRMLCRMKARNLRWRHYDRFLVGENRWRAQRYGVGEGLIDFGDRSLKPMTVLMDELMGMLSEDAEALGTLPEIARLRQIAEHGNSATRQRRVHAEALARGEDAGRAVVRHLIEEFHADL</sequence>
<organism>
    <name type="scientific">Ruegeria pomeroyi (strain ATCC 700808 / DSM 15171 / DSS-3)</name>
    <name type="common">Silicibacter pomeroyi</name>
    <dbReference type="NCBI Taxonomy" id="246200"/>
    <lineage>
        <taxon>Bacteria</taxon>
        <taxon>Pseudomonadati</taxon>
        <taxon>Pseudomonadota</taxon>
        <taxon>Alphaproteobacteria</taxon>
        <taxon>Rhodobacterales</taxon>
        <taxon>Roseobacteraceae</taxon>
        <taxon>Ruegeria</taxon>
    </lineage>
</organism>
<protein>
    <recommendedName>
        <fullName evidence="1">Putative glutamate--cysteine ligase 2</fullName>
        <ecNumber evidence="1">6.3.2.2</ecNumber>
    </recommendedName>
    <alternativeName>
        <fullName evidence="1">Gamma-glutamylcysteine synthetase 2</fullName>
        <shortName evidence="1">GCS 2</shortName>
        <shortName evidence="1">Gamma-GCS 2</shortName>
    </alternativeName>
</protein>
<comment type="function">
    <text evidence="1">ATP-dependent carboxylate-amine ligase which exhibits weak glutamate--cysteine ligase activity.</text>
</comment>
<comment type="catalytic activity">
    <reaction evidence="1">
        <text>L-cysteine + L-glutamate + ATP = gamma-L-glutamyl-L-cysteine + ADP + phosphate + H(+)</text>
        <dbReference type="Rhea" id="RHEA:13285"/>
        <dbReference type="ChEBI" id="CHEBI:15378"/>
        <dbReference type="ChEBI" id="CHEBI:29985"/>
        <dbReference type="ChEBI" id="CHEBI:30616"/>
        <dbReference type="ChEBI" id="CHEBI:35235"/>
        <dbReference type="ChEBI" id="CHEBI:43474"/>
        <dbReference type="ChEBI" id="CHEBI:58173"/>
        <dbReference type="ChEBI" id="CHEBI:456216"/>
        <dbReference type="EC" id="6.3.2.2"/>
    </reaction>
</comment>
<comment type="similarity">
    <text evidence="1">Belongs to the glutamate--cysteine ligase type 2 family. YbdK subfamily.</text>
</comment>
<accession>Q5LRC0</accession>
<feature type="chain" id="PRO_0000218219" description="Putative glutamate--cysteine ligase 2">
    <location>
        <begin position="1"/>
        <end position="384"/>
    </location>
</feature>
<reference key="1">
    <citation type="journal article" date="2004" name="Nature">
        <title>Genome sequence of Silicibacter pomeroyi reveals adaptations to the marine environment.</title>
        <authorList>
            <person name="Moran M.A."/>
            <person name="Buchan A."/>
            <person name="Gonzalez J.M."/>
            <person name="Heidelberg J.F."/>
            <person name="Whitman W.B."/>
            <person name="Kiene R.P."/>
            <person name="Henriksen J.R."/>
            <person name="King G.M."/>
            <person name="Belas R."/>
            <person name="Fuqua C."/>
            <person name="Brinkac L.M."/>
            <person name="Lewis M."/>
            <person name="Johri S."/>
            <person name="Weaver B."/>
            <person name="Pai G."/>
            <person name="Eisen J.A."/>
            <person name="Rahe E."/>
            <person name="Sheldon W.M."/>
            <person name="Ye W."/>
            <person name="Miller T.R."/>
            <person name="Carlton J."/>
            <person name="Rasko D.A."/>
            <person name="Paulsen I.T."/>
            <person name="Ren Q."/>
            <person name="Daugherty S.C."/>
            <person name="DeBoy R.T."/>
            <person name="Dodson R.J."/>
            <person name="Durkin A.S."/>
            <person name="Madupu R."/>
            <person name="Nelson W.C."/>
            <person name="Sullivan S.A."/>
            <person name="Rosovitz M.J."/>
            <person name="Haft D.H."/>
            <person name="Selengut J."/>
            <person name="Ward N."/>
        </authorList>
    </citation>
    <scope>NUCLEOTIDE SEQUENCE [LARGE SCALE GENOMIC DNA]</scope>
    <source>
        <strain>ATCC 700808 / DSM 15171 / DSS-3</strain>
    </source>
</reference>
<reference key="2">
    <citation type="journal article" date="2014" name="Stand. Genomic Sci.">
        <title>An updated genome annotation for the model marine bacterium Ruegeria pomeroyi DSS-3.</title>
        <authorList>
            <person name="Rivers A.R."/>
            <person name="Smith C.B."/>
            <person name="Moran M.A."/>
        </authorList>
    </citation>
    <scope>GENOME REANNOTATION</scope>
    <source>
        <strain>ATCC 700808 / DSM 15171 / DSS-3</strain>
    </source>
</reference>
<name>GCS2_RUEPO</name>